<geneLocation type="chloroplast"/>
<protein>
    <recommendedName>
        <fullName evidence="1">tRNA(Ile)-lysidine synthase, chloroplastic</fullName>
        <ecNumber evidence="1">6.3.4.19</ecNumber>
    </recommendedName>
    <alternativeName>
        <fullName evidence="1">tRNA(Ile)-2-lysyl-cytidine synthase</fullName>
    </alternativeName>
    <alternativeName>
        <fullName evidence="1">tRNA(Ile)-lysidine synthetase</fullName>
    </alternativeName>
</protein>
<sequence>MQNNKDNYLKFTKMDKKSIRAPYDQNDLSKKIQRIKKREDIFLLYKINNIITEHTLLQPKQRILIAVSGGQDSICLLRILFDLQRKWSWKLGIIHCDHRWNSRSKIQAEHVACLAINLQINYHEGIAIESVQKESIARLWRYNVIQSVAISNNYTAIITGHNASDRIETLLYNLMRGSGLHGLQSIKWKRNLCFSHFTRSVLSKIKFSFLVKKLKFIKTFMDHEDFQGNHFFFLKKRKQLHLIRPFLETTRTEIRNILTIWNFPSWPDVSNKELRIRRNRIRHRVIPYIRIHYNPNIDQTLVRWAEIVQSETFYLEQLTNYILFKIEIKKKISSISLKIPLEQLRKQKEPSEEKLNFYQSAIPVDLLRSLPVAIQRRVLKQYIYINTNRILGFQYIEQIRLSCLFSLQDSLRKFLHRHRCRPIYLSEHISTHSMKSSTSDTCIDWKGPKEKKKLVTPWLIFPGGIKFLIRKNYLFIFSPKNSSLTIKRPRIEQ</sequence>
<reference key="1">
    <citation type="journal article" date="2005" name="BMC Biol.">
        <title>The complete chloroplast DNA sequences of the charophycean green algae Staurastrum and Zygnema reveal that the chloroplast genome underwent extensive changes during the evolution of the Zygnematales.</title>
        <authorList>
            <person name="Turmel M."/>
            <person name="Otis C."/>
            <person name="Lemieux C."/>
        </authorList>
    </citation>
    <scope>NUCLEOTIDE SEQUENCE [LARGE SCALE GENOMIC DNA]</scope>
</reference>
<dbReference type="EC" id="6.3.4.19" evidence="1"/>
<dbReference type="EMBL" id="AY958085">
    <property type="protein sequence ID" value="AAX45766.1"/>
    <property type="molecule type" value="Genomic_DNA"/>
</dbReference>
<dbReference type="SMR" id="Q32RX0"/>
<dbReference type="GO" id="GO:0009507">
    <property type="term" value="C:chloroplast"/>
    <property type="evidence" value="ECO:0007669"/>
    <property type="project" value="UniProtKB-SubCell"/>
</dbReference>
<dbReference type="GO" id="GO:0005524">
    <property type="term" value="F:ATP binding"/>
    <property type="evidence" value="ECO:0007669"/>
    <property type="project" value="UniProtKB-UniRule"/>
</dbReference>
<dbReference type="GO" id="GO:0032267">
    <property type="term" value="F:tRNA(Ile)-lysidine synthase activity"/>
    <property type="evidence" value="ECO:0007669"/>
    <property type="project" value="UniProtKB-EC"/>
</dbReference>
<dbReference type="GO" id="GO:0006400">
    <property type="term" value="P:tRNA modification"/>
    <property type="evidence" value="ECO:0007669"/>
    <property type="project" value="UniProtKB-UniRule"/>
</dbReference>
<dbReference type="CDD" id="cd01992">
    <property type="entry name" value="TilS_N"/>
    <property type="match status" value="1"/>
</dbReference>
<dbReference type="Gene3D" id="1.20.59.20">
    <property type="match status" value="1"/>
</dbReference>
<dbReference type="Gene3D" id="3.40.50.620">
    <property type="entry name" value="HUPs"/>
    <property type="match status" value="1"/>
</dbReference>
<dbReference type="HAMAP" id="MF_01161">
    <property type="entry name" value="tRNA_Ile_lys_synt"/>
    <property type="match status" value="1"/>
</dbReference>
<dbReference type="InterPro" id="IPR014729">
    <property type="entry name" value="Rossmann-like_a/b/a_fold"/>
</dbReference>
<dbReference type="InterPro" id="IPR011063">
    <property type="entry name" value="TilS/TtcA_N"/>
</dbReference>
<dbReference type="InterPro" id="IPR012094">
    <property type="entry name" value="tRNA_Ile_lys_synt"/>
</dbReference>
<dbReference type="InterPro" id="IPR012795">
    <property type="entry name" value="tRNA_Ile_lys_synt_N"/>
</dbReference>
<dbReference type="NCBIfam" id="TIGR02432">
    <property type="entry name" value="lysidine_TilS_N"/>
    <property type="match status" value="1"/>
</dbReference>
<dbReference type="PANTHER" id="PTHR43033">
    <property type="entry name" value="TRNA(ILE)-LYSIDINE SYNTHASE-RELATED"/>
    <property type="match status" value="1"/>
</dbReference>
<dbReference type="PANTHER" id="PTHR43033:SF1">
    <property type="entry name" value="TRNA(ILE)-LYSIDINE SYNTHASE-RELATED"/>
    <property type="match status" value="1"/>
</dbReference>
<dbReference type="Pfam" id="PF01171">
    <property type="entry name" value="ATP_bind_3"/>
    <property type="match status" value="1"/>
</dbReference>
<dbReference type="SUPFAM" id="SSF52402">
    <property type="entry name" value="Adenine nucleotide alpha hydrolases-like"/>
    <property type="match status" value="1"/>
</dbReference>
<dbReference type="SUPFAM" id="SSF82829">
    <property type="entry name" value="MesJ substrate recognition domain-like"/>
    <property type="match status" value="1"/>
</dbReference>
<keyword id="KW-0067">ATP-binding</keyword>
<keyword id="KW-0150">Chloroplast</keyword>
<keyword id="KW-0436">Ligase</keyword>
<keyword id="KW-0547">Nucleotide-binding</keyword>
<keyword id="KW-0934">Plastid</keyword>
<keyword id="KW-0819">tRNA processing</keyword>
<gene>
    <name evidence="1" type="primary">tilS</name>
</gene>
<comment type="function">
    <text evidence="1">Ligates lysine onto the cytidine present at position 34 of the AUA codon-specific tRNA(Ile) that contains the anticodon CAU, in an ATP-dependent manner. Cytidine is converted to lysidine, thus changing the amino acid specificity of the tRNA from methionine to isoleucine.</text>
</comment>
<comment type="catalytic activity">
    <reaction evidence="1">
        <text>cytidine(34) in tRNA(Ile2) + L-lysine + ATP = lysidine(34) in tRNA(Ile2) + AMP + diphosphate + H(+)</text>
        <dbReference type="Rhea" id="RHEA:43744"/>
        <dbReference type="Rhea" id="RHEA-COMP:10625"/>
        <dbReference type="Rhea" id="RHEA-COMP:10670"/>
        <dbReference type="ChEBI" id="CHEBI:15378"/>
        <dbReference type="ChEBI" id="CHEBI:30616"/>
        <dbReference type="ChEBI" id="CHEBI:32551"/>
        <dbReference type="ChEBI" id="CHEBI:33019"/>
        <dbReference type="ChEBI" id="CHEBI:82748"/>
        <dbReference type="ChEBI" id="CHEBI:83665"/>
        <dbReference type="ChEBI" id="CHEBI:456215"/>
        <dbReference type="EC" id="6.3.4.19"/>
    </reaction>
</comment>
<comment type="subcellular location">
    <subcellularLocation>
        <location>Plastid</location>
        <location>Chloroplast</location>
    </subcellularLocation>
</comment>
<comment type="domain">
    <text>The N-terminal region contains the highly conserved SGGXDS motif, predicted to be a P-loop motif involved in ATP binding.</text>
</comment>
<comment type="similarity">
    <text evidence="1">Belongs to the tRNA(Ile)-lysidine synthase family.</text>
</comment>
<evidence type="ECO:0000255" key="1">
    <source>
        <dbReference type="HAMAP-Rule" id="MF_01161"/>
    </source>
</evidence>
<organism>
    <name type="scientific">Staurastrum punctulatum</name>
    <name type="common">Green alga</name>
    <name type="synonym">Cosmoastrum punctulatum</name>
    <dbReference type="NCBI Taxonomy" id="102822"/>
    <lineage>
        <taxon>Eukaryota</taxon>
        <taxon>Viridiplantae</taxon>
        <taxon>Streptophyta</taxon>
        <taxon>Zygnematophyceae</taxon>
        <taxon>Zygnematophycidae</taxon>
        <taxon>Desmidiales</taxon>
        <taxon>Desmidiaceae</taxon>
        <taxon>Staurastrum</taxon>
    </lineage>
</organism>
<name>TILS_STAPU</name>
<proteinExistence type="inferred from homology"/>
<accession>Q32RX0</accession>
<feature type="chain" id="PRO_0000277071" description="tRNA(Ile)-lysidine synthase, chloroplastic">
    <location>
        <begin position="1"/>
        <end position="493"/>
    </location>
</feature>
<feature type="binding site" evidence="1">
    <location>
        <begin position="68"/>
        <end position="73"/>
    </location>
    <ligand>
        <name>ATP</name>
        <dbReference type="ChEBI" id="CHEBI:30616"/>
    </ligand>
</feature>